<name>RSXC_SALEP</name>
<comment type="function">
    <text evidence="1">Part of a membrane-bound complex that couples electron transfer with translocation of ions across the membrane. Required to maintain the reduced state of SoxR.</text>
</comment>
<comment type="cofactor">
    <cofactor evidence="1">
        <name>[4Fe-4S] cluster</name>
        <dbReference type="ChEBI" id="CHEBI:49883"/>
    </cofactor>
    <text evidence="1">Binds 2 [4Fe-4S] clusters per subunit.</text>
</comment>
<comment type="subunit">
    <text evidence="1">The complex is composed of six subunits: RsxA, RsxB, RsxC, RsxD, RsxE and RsxG.</text>
</comment>
<comment type="subcellular location">
    <subcellularLocation>
        <location evidence="1">Cell inner membrane</location>
        <topology evidence="1">Peripheral membrane protein</topology>
    </subcellularLocation>
</comment>
<comment type="similarity">
    <text evidence="1">Belongs to the 4Fe4S bacterial-type ferredoxin family. RnfC subfamily.</text>
</comment>
<gene>
    <name evidence="1" type="primary">rsxC</name>
    <name type="synonym">rnfC</name>
    <name type="ordered locus">SEN1590</name>
</gene>
<organism>
    <name type="scientific">Salmonella enteritidis PT4 (strain P125109)</name>
    <dbReference type="NCBI Taxonomy" id="550537"/>
    <lineage>
        <taxon>Bacteria</taxon>
        <taxon>Pseudomonadati</taxon>
        <taxon>Pseudomonadota</taxon>
        <taxon>Gammaproteobacteria</taxon>
        <taxon>Enterobacterales</taxon>
        <taxon>Enterobacteriaceae</taxon>
        <taxon>Salmonella</taxon>
    </lineage>
</organism>
<keyword id="KW-0004">4Fe-4S</keyword>
<keyword id="KW-0997">Cell inner membrane</keyword>
<keyword id="KW-1003">Cell membrane</keyword>
<keyword id="KW-0249">Electron transport</keyword>
<keyword id="KW-0408">Iron</keyword>
<keyword id="KW-0411">Iron-sulfur</keyword>
<keyword id="KW-0472">Membrane</keyword>
<keyword id="KW-0479">Metal-binding</keyword>
<keyword id="KW-0677">Repeat</keyword>
<keyword id="KW-1278">Translocase</keyword>
<keyword id="KW-0813">Transport</keyword>
<reference key="1">
    <citation type="journal article" date="2008" name="Genome Res.">
        <title>Comparative genome analysis of Salmonella enteritidis PT4 and Salmonella gallinarum 287/91 provides insights into evolutionary and host adaptation pathways.</title>
        <authorList>
            <person name="Thomson N.R."/>
            <person name="Clayton D.J."/>
            <person name="Windhorst D."/>
            <person name="Vernikos G."/>
            <person name="Davidson S."/>
            <person name="Churcher C."/>
            <person name="Quail M.A."/>
            <person name="Stevens M."/>
            <person name="Jones M.A."/>
            <person name="Watson M."/>
            <person name="Barron A."/>
            <person name="Layton A."/>
            <person name="Pickard D."/>
            <person name="Kingsley R.A."/>
            <person name="Bignell A."/>
            <person name="Clark L."/>
            <person name="Harris B."/>
            <person name="Ormond D."/>
            <person name="Abdellah Z."/>
            <person name="Brooks K."/>
            <person name="Cherevach I."/>
            <person name="Chillingworth T."/>
            <person name="Woodward J."/>
            <person name="Norberczak H."/>
            <person name="Lord A."/>
            <person name="Arrowsmith C."/>
            <person name="Jagels K."/>
            <person name="Moule S."/>
            <person name="Mungall K."/>
            <person name="Saunders M."/>
            <person name="Whitehead S."/>
            <person name="Chabalgoity J.A."/>
            <person name="Maskell D."/>
            <person name="Humphreys T."/>
            <person name="Roberts M."/>
            <person name="Barrow P.A."/>
            <person name="Dougan G."/>
            <person name="Parkhill J."/>
        </authorList>
    </citation>
    <scope>NUCLEOTIDE SEQUENCE [LARGE SCALE GENOMIC DNA]</scope>
    <source>
        <strain>P125109</strain>
    </source>
</reference>
<accession>B5QV02</accession>
<feature type="chain" id="PRO_1000125363" description="Ion-translocating oxidoreductase complex subunit C">
    <location>
        <begin position="1"/>
        <end position="704"/>
    </location>
</feature>
<feature type="domain" description="4Fe-4S ferredoxin-type 1" evidence="1">
    <location>
        <begin position="368"/>
        <end position="397"/>
    </location>
</feature>
<feature type="domain" description="4Fe-4S ferredoxin-type 2" evidence="1">
    <location>
        <begin position="407"/>
        <end position="436"/>
    </location>
</feature>
<feature type="region of interest" description="Disordered" evidence="2">
    <location>
        <begin position="534"/>
        <end position="682"/>
    </location>
</feature>
<feature type="binding site" evidence="1">
    <location>
        <position position="377"/>
    </location>
    <ligand>
        <name>[4Fe-4S] cluster</name>
        <dbReference type="ChEBI" id="CHEBI:49883"/>
        <label>1</label>
    </ligand>
</feature>
<feature type="binding site" evidence="1">
    <location>
        <position position="380"/>
    </location>
    <ligand>
        <name>[4Fe-4S] cluster</name>
        <dbReference type="ChEBI" id="CHEBI:49883"/>
        <label>1</label>
    </ligand>
</feature>
<feature type="binding site" evidence="1">
    <location>
        <position position="383"/>
    </location>
    <ligand>
        <name>[4Fe-4S] cluster</name>
        <dbReference type="ChEBI" id="CHEBI:49883"/>
        <label>1</label>
    </ligand>
</feature>
<feature type="binding site" evidence="1">
    <location>
        <position position="387"/>
    </location>
    <ligand>
        <name>[4Fe-4S] cluster</name>
        <dbReference type="ChEBI" id="CHEBI:49883"/>
        <label>2</label>
    </ligand>
</feature>
<feature type="binding site" evidence="1">
    <location>
        <position position="416"/>
    </location>
    <ligand>
        <name>[4Fe-4S] cluster</name>
        <dbReference type="ChEBI" id="CHEBI:49883"/>
        <label>2</label>
    </ligand>
</feature>
<feature type="binding site" evidence="1">
    <location>
        <position position="419"/>
    </location>
    <ligand>
        <name>[4Fe-4S] cluster</name>
        <dbReference type="ChEBI" id="CHEBI:49883"/>
        <label>2</label>
    </ligand>
</feature>
<feature type="binding site" evidence="1">
    <location>
        <position position="422"/>
    </location>
    <ligand>
        <name>[4Fe-4S] cluster</name>
        <dbReference type="ChEBI" id="CHEBI:49883"/>
        <label>2</label>
    </ligand>
</feature>
<feature type="binding site" evidence="1">
    <location>
        <position position="426"/>
    </location>
    <ligand>
        <name>[4Fe-4S] cluster</name>
        <dbReference type="ChEBI" id="CHEBI:49883"/>
        <label>1</label>
    </ligand>
</feature>
<proteinExistence type="inferred from homology"/>
<dbReference type="EC" id="7.-.-.-" evidence="1"/>
<dbReference type="EMBL" id="AM933172">
    <property type="protein sequence ID" value="CAR33172.1"/>
    <property type="molecule type" value="Genomic_DNA"/>
</dbReference>
<dbReference type="RefSeq" id="WP_000915639.1">
    <property type="nucleotide sequence ID" value="NC_011294.1"/>
</dbReference>
<dbReference type="SMR" id="B5QV02"/>
<dbReference type="KEGG" id="set:SEN1590"/>
<dbReference type="HOGENOM" id="CLU_010808_2_1_6"/>
<dbReference type="Proteomes" id="UP000000613">
    <property type="component" value="Chromosome"/>
</dbReference>
<dbReference type="GO" id="GO:0005886">
    <property type="term" value="C:plasma membrane"/>
    <property type="evidence" value="ECO:0007669"/>
    <property type="project" value="UniProtKB-SubCell"/>
</dbReference>
<dbReference type="GO" id="GO:0051539">
    <property type="term" value="F:4 iron, 4 sulfur cluster binding"/>
    <property type="evidence" value="ECO:0007669"/>
    <property type="project" value="UniProtKB-KW"/>
</dbReference>
<dbReference type="GO" id="GO:0009055">
    <property type="term" value="F:electron transfer activity"/>
    <property type="evidence" value="ECO:0007669"/>
    <property type="project" value="InterPro"/>
</dbReference>
<dbReference type="GO" id="GO:0046872">
    <property type="term" value="F:metal ion binding"/>
    <property type="evidence" value="ECO:0007669"/>
    <property type="project" value="UniProtKB-KW"/>
</dbReference>
<dbReference type="GO" id="GO:0022900">
    <property type="term" value="P:electron transport chain"/>
    <property type="evidence" value="ECO:0007669"/>
    <property type="project" value="UniProtKB-UniRule"/>
</dbReference>
<dbReference type="Gene3D" id="3.30.70.20">
    <property type="match status" value="1"/>
</dbReference>
<dbReference type="Gene3D" id="3.40.50.11540">
    <property type="entry name" value="NADH-ubiquinone oxidoreductase 51kDa subunit"/>
    <property type="match status" value="1"/>
</dbReference>
<dbReference type="HAMAP" id="MF_00461">
    <property type="entry name" value="RsxC_RnfC"/>
    <property type="match status" value="1"/>
</dbReference>
<dbReference type="InterPro" id="IPR017896">
    <property type="entry name" value="4Fe4S_Fe-S-bd"/>
</dbReference>
<dbReference type="InterPro" id="IPR017900">
    <property type="entry name" value="4Fe4S_Fe_S_CS"/>
</dbReference>
<dbReference type="InterPro" id="IPR010208">
    <property type="entry name" value="Ion_transpt_RnfC/RsxC"/>
</dbReference>
<dbReference type="InterPro" id="IPR011538">
    <property type="entry name" value="Nuo51_FMN-bd"/>
</dbReference>
<dbReference type="InterPro" id="IPR037225">
    <property type="entry name" value="Nuo51_FMN-bd_sf"/>
</dbReference>
<dbReference type="InterPro" id="IPR026902">
    <property type="entry name" value="RnfC_N"/>
</dbReference>
<dbReference type="InterPro" id="IPR019554">
    <property type="entry name" value="Soluble_ligand-bd"/>
</dbReference>
<dbReference type="NCBIfam" id="NF003454">
    <property type="entry name" value="PRK05035.1"/>
    <property type="match status" value="1"/>
</dbReference>
<dbReference type="NCBIfam" id="TIGR01945">
    <property type="entry name" value="rnfC"/>
    <property type="match status" value="1"/>
</dbReference>
<dbReference type="PANTHER" id="PTHR43034">
    <property type="entry name" value="ION-TRANSLOCATING OXIDOREDUCTASE COMPLEX SUBUNIT C"/>
    <property type="match status" value="1"/>
</dbReference>
<dbReference type="PANTHER" id="PTHR43034:SF2">
    <property type="entry name" value="ION-TRANSLOCATING OXIDOREDUCTASE COMPLEX SUBUNIT C"/>
    <property type="match status" value="1"/>
</dbReference>
<dbReference type="Pfam" id="PF01512">
    <property type="entry name" value="Complex1_51K"/>
    <property type="match status" value="1"/>
</dbReference>
<dbReference type="Pfam" id="PF12838">
    <property type="entry name" value="Fer4_7"/>
    <property type="match status" value="1"/>
</dbReference>
<dbReference type="Pfam" id="PF13375">
    <property type="entry name" value="RnfC_N"/>
    <property type="match status" value="1"/>
</dbReference>
<dbReference type="Pfam" id="PF10531">
    <property type="entry name" value="SLBB"/>
    <property type="match status" value="1"/>
</dbReference>
<dbReference type="SUPFAM" id="SSF46548">
    <property type="entry name" value="alpha-helical ferredoxin"/>
    <property type="match status" value="1"/>
</dbReference>
<dbReference type="SUPFAM" id="SSF142019">
    <property type="entry name" value="Nqo1 FMN-binding domain-like"/>
    <property type="match status" value="1"/>
</dbReference>
<dbReference type="PROSITE" id="PS00198">
    <property type="entry name" value="4FE4S_FER_1"/>
    <property type="match status" value="2"/>
</dbReference>
<dbReference type="PROSITE" id="PS51379">
    <property type="entry name" value="4FE4S_FER_2"/>
    <property type="match status" value="2"/>
</dbReference>
<sequence length="704" mass="75270">MLKLFSAFRKDKIWDFDGGIHPPEMKTQSNGTPLRQVPLAPRFVIPLKQHIGAEGELCVSVGDRVLRGQALTRGRGRMLPVHAPTSGTVIAIAPHSTAHPSALAELSVIIDADGEDRWIEREGWSDYRAHSREALIERIHQYGVAGLGGAGFPTGVKLQGGGDKITTLIINAAECEPYITADDRLMQDCAAQIVEGIRILAHILQPREVLIGIEDNKPQAISMLRAVLADAHDISLRVIPTKYPSGGAKQLTQILTGKQVPHGGRSSDIGVLMQNVGTAYAVKRAVVDGEPITERVVTLTGEAVSRPGNVWARLGTPVRHLLNDAGFCPSADQMVIMGGPLMGFPLPWLDVPVVKITNCLLAPSVTEMGAPQEEKSCIRCSACADACPADLLPQQLYWFSKGQQHDKATAHHIADCIECGACAWVCPSNIPLVQYFRQEKAEINAIRLEEKRAAEAKARFEARQARLEREKAARLARHKSAAVQPAAKDQDAIAAALARVKEKQAQATQPVVIQAGSLPDNSAVIAAREARKAQARAKQAAHPVADSAISGGDPRKAAVEAAIARAKARKQEQQAGSEPAEPVDPRKAAVEAAIARAKARKQEQQAGSEPAEPVDPRKAAVEAAIARAKARKQEQQAGGEPAEPVDPRKAAVEAAIARAKARKQEQQAGSEPAEPADPRKAAVAAAIARVQAKKAAQQQVVNED</sequence>
<protein>
    <recommendedName>
        <fullName evidence="1">Ion-translocating oxidoreductase complex subunit C</fullName>
        <ecNumber evidence="1">7.-.-.-</ecNumber>
    </recommendedName>
    <alternativeName>
        <fullName evidence="1">Rsx electron transport complex subunit C</fullName>
    </alternativeName>
</protein>
<evidence type="ECO:0000255" key="1">
    <source>
        <dbReference type="HAMAP-Rule" id="MF_00461"/>
    </source>
</evidence>
<evidence type="ECO:0000256" key="2">
    <source>
        <dbReference type="SAM" id="MobiDB-lite"/>
    </source>
</evidence>